<protein>
    <recommendedName>
        <fullName evidence="1">UPF0173 metal-dependent hydrolase PF1764</fullName>
    </recommendedName>
</protein>
<gene>
    <name type="ordered locus">PF1764</name>
</gene>
<reference key="1">
    <citation type="journal article" date="1999" name="Genetics">
        <title>Divergence of the hyperthermophilic archaea Pyrococcus furiosus and P. horikoshii inferred from complete genomic sequences.</title>
        <authorList>
            <person name="Maeder D.L."/>
            <person name="Weiss R.B."/>
            <person name="Dunn D.M."/>
            <person name="Cherry J.L."/>
            <person name="Gonzalez J.M."/>
            <person name="DiRuggiero J."/>
            <person name="Robb F.T."/>
        </authorList>
    </citation>
    <scope>NUCLEOTIDE SEQUENCE [LARGE SCALE GENOMIC DNA]</scope>
    <source>
        <strain>ATCC 43587 / DSM 3638 / JCM 8422 / Vc1</strain>
    </source>
</reference>
<feature type="chain" id="PRO_0000156400" description="UPF0173 metal-dependent hydrolase PF1764">
    <location>
        <begin position="1"/>
        <end position="225"/>
    </location>
</feature>
<evidence type="ECO:0000255" key="1">
    <source>
        <dbReference type="HAMAP-Rule" id="MF_00457"/>
    </source>
</evidence>
<accession>Q8U053</accession>
<sequence length="225" mass="24512">MVKVTFLGHAAFYIEGSKKILIDPFLSGNPVASAKPDDFKSVDLILVTHAHGDHLGDVGTIAKRTGAKVVAMYDLANYIAEKYKGVETIGMNYGPTKVDEVEIVQVPAWHSSSDGKYSIGNACGYIVKLDGVTIYHAGDTYVFKDMELFAELYGPIDVALLPIGGHFTMGVREAAKAVELLKPRHVIPMHYNTWPPIAADPEEFKKLVGEKAKVVILKPGESLEL</sequence>
<comment type="similarity">
    <text evidence="1">Belongs to the UPF0173 family.</text>
</comment>
<keyword id="KW-0378">Hydrolase</keyword>
<keyword id="KW-1185">Reference proteome</keyword>
<name>Y1764_PYRFU</name>
<dbReference type="EMBL" id="AE009950">
    <property type="protein sequence ID" value="AAL81888.1"/>
    <property type="molecule type" value="Genomic_DNA"/>
</dbReference>
<dbReference type="RefSeq" id="WP_011012905.1">
    <property type="nucleotide sequence ID" value="NZ_CP023154.1"/>
</dbReference>
<dbReference type="SMR" id="Q8U053"/>
<dbReference type="PaxDb" id="186497-PF1764"/>
<dbReference type="KEGG" id="pfu:PF1764"/>
<dbReference type="PATRIC" id="fig|186497.12.peg.1835"/>
<dbReference type="eggNOG" id="arCOG00497">
    <property type="taxonomic scope" value="Archaea"/>
</dbReference>
<dbReference type="HOGENOM" id="CLU_070010_4_0_2"/>
<dbReference type="OrthoDB" id="28313at2157"/>
<dbReference type="PhylomeDB" id="Q8U053"/>
<dbReference type="Proteomes" id="UP000001013">
    <property type="component" value="Chromosome"/>
</dbReference>
<dbReference type="GO" id="GO:0016787">
    <property type="term" value="F:hydrolase activity"/>
    <property type="evidence" value="ECO:0007669"/>
    <property type="project" value="UniProtKB-UniRule"/>
</dbReference>
<dbReference type="Gene3D" id="3.60.15.10">
    <property type="entry name" value="Ribonuclease Z/Hydroxyacylglutathione hydrolase-like"/>
    <property type="match status" value="1"/>
</dbReference>
<dbReference type="HAMAP" id="MF_00457">
    <property type="entry name" value="UPF0173"/>
    <property type="match status" value="1"/>
</dbReference>
<dbReference type="InterPro" id="IPR001279">
    <property type="entry name" value="Metallo-B-lactamas"/>
</dbReference>
<dbReference type="InterPro" id="IPR036866">
    <property type="entry name" value="RibonucZ/Hydroxyglut_hydro"/>
</dbReference>
<dbReference type="InterPro" id="IPR022877">
    <property type="entry name" value="UPF0173"/>
</dbReference>
<dbReference type="InterPro" id="IPR050114">
    <property type="entry name" value="UPF0173_UPF0282_UlaG_hydrolase"/>
</dbReference>
<dbReference type="NCBIfam" id="NF001911">
    <property type="entry name" value="PRK00685.1"/>
    <property type="match status" value="1"/>
</dbReference>
<dbReference type="PANTHER" id="PTHR43546:SF3">
    <property type="entry name" value="UPF0173 METAL-DEPENDENT HYDROLASE MJ1163"/>
    <property type="match status" value="1"/>
</dbReference>
<dbReference type="PANTHER" id="PTHR43546">
    <property type="entry name" value="UPF0173 METAL-DEPENDENT HYDROLASE MJ1163-RELATED"/>
    <property type="match status" value="1"/>
</dbReference>
<dbReference type="Pfam" id="PF13483">
    <property type="entry name" value="Lactamase_B_3"/>
    <property type="match status" value="1"/>
</dbReference>
<dbReference type="SMART" id="SM00849">
    <property type="entry name" value="Lactamase_B"/>
    <property type="match status" value="1"/>
</dbReference>
<dbReference type="SUPFAM" id="SSF56281">
    <property type="entry name" value="Metallo-hydrolase/oxidoreductase"/>
    <property type="match status" value="1"/>
</dbReference>
<organism>
    <name type="scientific">Pyrococcus furiosus (strain ATCC 43587 / DSM 3638 / JCM 8422 / Vc1)</name>
    <dbReference type="NCBI Taxonomy" id="186497"/>
    <lineage>
        <taxon>Archaea</taxon>
        <taxon>Methanobacteriati</taxon>
        <taxon>Methanobacteriota</taxon>
        <taxon>Thermococci</taxon>
        <taxon>Thermococcales</taxon>
        <taxon>Thermococcaceae</taxon>
        <taxon>Pyrococcus</taxon>
    </lineage>
</organism>
<proteinExistence type="inferred from homology"/>